<dbReference type="EC" id="2.7.7.8" evidence="1"/>
<dbReference type="EMBL" id="CP000038">
    <property type="protein sequence ID" value="AAZ89885.1"/>
    <property type="status" value="ALT_INIT"/>
    <property type="molecule type" value="Genomic_DNA"/>
</dbReference>
<dbReference type="RefSeq" id="WP_001298740.1">
    <property type="nucleotide sequence ID" value="NC_007384.1"/>
</dbReference>
<dbReference type="SMR" id="Q3YX77"/>
<dbReference type="GeneID" id="93778819"/>
<dbReference type="KEGG" id="ssn:SSON_3310"/>
<dbReference type="HOGENOM" id="CLU_004217_2_2_6"/>
<dbReference type="Proteomes" id="UP000002529">
    <property type="component" value="Chromosome"/>
</dbReference>
<dbReference type="GO" id="GO:0005829">
    <property type="term" value="C:cytosol"/>
    <property type="evidence" value="ECO:0007669"/>
    <property type="project" value="TreeGrafter"/>
</dbReference>
<dbReference type="GO" id="GO:0000175">
    <property type="term" value="F:3'-5'-RNA exonuclease activity"/>
    <property type="evidence" value="ECO:0007669"/>
    <property type="project" value="TreeGrafter"/>
</dbReference>
<dbReference type="GO" id="GO:0000287">
    <property type="term" value="F:magnesium ion binding"/>
    <property type="evidence" value="ECO:0007669"/>
    <property type="project" value="UniProtKB-UniRule"/>
</dbReference>
<dbReference type="GO" id="GO:0004654">
    <property type="term" value="F:polyribonucleotide nucleotidyltransferase activity"/>
    <property type="evidence" value="ECO:0007669"/>
    <property type="project" value="UniProtKB-UniRule"/>
</dbReference>
<dbReference type="GO" id="GO:0003723">
    <property type="term" value="F:RNA binding"/>
    <property type="evidence" value="ECO:0007669"/>
    <property type="project" value="UniProtKB-UniRule"/>
</dbReference>
<dbReference type="GO" id="GO:0006402">
    <property type="term" value="P:mRNA catabolic process"/>
    <property type="evidence" value="ECO:0007669"/>
    <property type="project" value="UniProtKB-UniRule"/>
</dbReference>
<dbReference type="GO" id="GO:0006396">
    <property type="term" value="P:RNA processing"/>
    <property type="evidence" value="ECO:0007669"/>
    <property type="project" value="InterPro"/>
</dbReference>
<dbReference type="CDD" id="cd02393">
    <property type="entry name" value="KH-I_PNPase"/>
    <property type="match status" value="1"/>
</dbReference>
<dbReference type="CDD" id="cd11363">
    <property type="entry name" value="RNase_PH_PNPase_1"/>
    <property type="match status" value="1"/>
</dbReference>
<dbReference type="CDD" id="cd11364">
    <property type="entry name" value="RNase_PH_PNPase_2"/>
    <property type="match status" value="1"/>
</dbReference>
<dbReference type="CDD" id="cd04472">
    <property type="entry name" value="S1_PNPase"/>
    <property type="match status" value="1"/>
</dbReference>
<dbReference type="FunFam" id="2.40.50.140:FF:000023">
    <property type="entry name" value="Polyribonucleotide nucleotidyltransferase"/>
    <property type="match status" value="1"/>
</dbReference>
<dbReference type="FunFam" id="3.30.1370.10:FF:000001">
    <property type="entry name" value="Polyribonucleotide nucleotidyltransferase"/>
    <property type="match status" value="1"/>
</dbReference>
<dbReference type="FunFam" id="3.30.230.70:FF:000001">
    <property type="entry name" value="Polyribonucleotide nucleotidyltransferase"/>
    <property type="match status" value="1"/>
</dbReference>
<dbReference type="FunFam" id="3.30.230.70:FF:000002">
    <property type="entry name" value="Polyribonucleotide nucleotidyltransferase"/>
    <property type="match status" value="1"/>
</dbReference>
<dbReference type="Gene3D" id="3.30.230.70">
    <property type="entry name" value="GHMP Kinase, N-terminal domain"/>
    <property type="match status" value="2"/>
</dbReference>
<dbReference type="Gene3D" id="3.30.1370.10">
    <property type="entry name" value="K Homology domain, type 1"/>
    <property type="match status" value="1"/>
</dbReference>
<dbReference type="Gene3D" id="2.40.50.140">
    <property type="entry name" value="Nucleic acid-binding proteins"/>
    <property type="match status" value="1"/>
</dbReference>
<dbReference type="HAMAP" id="MF_01595">
    <property type="entry name" value="PNPase"/>
    <property type="match status" value="1"/>
</dbReference>
<dbReference type="InterPro" id="IPR001247">
    <property type="entry name" value="ExoRNase_PH_dom1"/>
</dbReference>
<dbReference type="InterPro" id="IPR015847">
    <property type="entry name" value="ExoRNase_PH_dom2"/>
</dbReference>
<dbReference type="InterPro" id="IPR036345">
    <property type="entry name" value="ExoRNase_PH_dom2_sf"/>
</dbReference>
<dbReference type="InterPro" id="IPR004087">
    <property type="entry name" value="KH_dom"/>
</dbReference>
<dbReference type="InterPro" id="IPR004088">
    <property type="entry name" value="KH_dom_type_1"/>
</dbReference>
<dbReference type="InterPro" id="IPR036612">
    <property type="entry name" value="KH_dom_type_1_sf"/>
</dbReference>
<dbReference type="InterPro" id="IPR012340">
    <property type="entry name" value="NA-bd_OB-fold"/>
</dbReference>
<dbReference type="InterPro" id="IPR012162">
    <property type="entry name" value="PNPase"/>
</dbReference>
<dbReference type="InterPro" id="IPR027408">
    <property type="entry name" value="PNPase/RNase_PH_dom_sf"/>
</dbReference>
<dbReference type="InterPro" id="IPR015848">
    <property type="entry name" value="PNPase_PH_RNA-bd_bac/org-type"/>
</dbReference>
<dbReference type="InterPro" id="IPR036456">
    <property type="entry name" value="PNPase_PH_RNA-bd_sf"/>
</dbReference>
<dbReference type="InterPro" id="IPR020568">
    <property type="entry name" value="Ribosomal_Su5_D2-typ_SF"/>
</dbReference>
<dbReference type="InterPro" id="IPR003029">
    <property type="entry name" value="S1_domain"/>
</dbReference>
<dbReference type="NCBIfam" id="TIGR03591">
    <property type="entry name" value="polynuc_phos"/>
    <property type="match status" value="1"/>
</dbReference>
<dbReference type="NCBIfam" id="NF008805">
    <property type="entry name" value="PRK11824.1"/>
    <property type="match status" value="1"/>
</dbReference>
<dbReference type="PANTHER" id="PTHR11252">
    <property type="entry name" value="POLYRIBONUCLEOTIDE NUCLEOTIDYLTRANSFERASE"/>
    <property type="match status" value="1"/>
</dbReference>
<dbReference type="PANTHER" id="PTHR11252:SF0">
    <property type="entry name" value="POLYRIBONUCLEOTIDE NUCLEOTIDYLTRANSFERASE 1, MITOCHONDRIAL"/>
    <property type="match status" value="1"/>
</dbReference>
<dbReference type="Pfam" id="PF00013">
    <property type="entry name" value="KH_1"/>
    <property type="match status" value="1"/>
</dbReference>
<dbReference type="Pfam" id="PF03726">
    <property type="entry name" value="PNPase"/>
    <property type="match status" value="1"/>
</dbReference>
<dbReference type="Pfam" id="PF01138">
    <property type="entry name" value="RNase_PH"/>
    <property type="match status" value="2"/>
</dbReference>
<dbReference type="Pfam" id="PF03725">
    <property type="entry name" value="RNase_PH_C"/>
    <property type="match status" value="2"/>
</dbReference>
<dbReference type="Pfam" id="PF00575">
    <property type="entry name" value="S1"/>
    <property type="match status" value="1"/>
</dbReference>
<dbReference type="PIRSF" id="PIRSF005499">
    <property type="entry name" value="PNPase"/>
    <property type="match status" value="1"/>
</dbReference>
<dbReference type="SMART" id="SM00322">
    <property type="entry name" value="KH"/>
    <property type="match status" value="1"/>
</dbReference>
<dbReference type="SMART" id="SM00316">
    <property type="entry name" value="S1"/>
    <property type="match status" value="1"/>
</dbReference>
<dbReference type="SUPFAM" id="SSF54791">
    <property type="entry name" value="Eukaryotic type KH-domain (KH-domain type I)"/>
    <property type="match status" value="1"/>
</dbReference>
<dbReference type="SUPFAM" id="SSF50249">
    <property type="entry name" value="Nucleic acid-binding proteins"/>
    <property type="match status" value="1"/>
</dbReference>
<dbReference type="SUPFAM" id="SSF46915">
    <property type="entry name" value="Polynucleotide phosphorylase/guanosine pentaphosphate synthase (PNPase/GPSI), domain 3"/>
    <property type="match status" value="1"/>
</dbReference>
<dbReference type="SUPFAM" id="SSF55666">
    <property type="entry name" value="Ribonuclease PH domain 2-like"/>
    <property type="match status" value="2"/>
</dbReference>
<dbReference type="SUPFAM" id="SSF54211">
    <property type="entry name" value="Ribosomal protein S5 domain 2-like"/>
    <property type="match status" value="2"/>
</dbReference>
<dbReference type="PROSITE" id="PS50084">
    <property type="entry name" value="KH_TYPE_1"/>
    <property type="match status" value="1"/>
</dbReference>
<dbReference type="PROSITE" id="PS50126">
    <property type="entry name" value="S1"/>
    <property type="match status" value="1"/>
</dbReference>
<reference key="1">
    <citation type="journal article" date="2005" name="Nucleic Acids Res.">
        <title>Genome dynamics and diversity of Shigella species, the etiologic agents of bacillary dysentery.</title>
        <authorList>
            <person name="Yang F."/>
            <person name="Yang J."/>
            <person name="Zhang X."/>
            <person name="Chen L."/>
            <person name="Jiang Y."/>
            <person name="Yan Y."/>
            <person name="Tang X."/>
            <person name="Wang J."/>
            <person name="Xiong Z."/>
            <person name="Dong J."/>
            <person name="Xue Y."/>
            <person name="Zhu Y."/>
            <person name="Xu X."/>
            <person name="Sun L."/>
            <person name="Chen S."/>
            <person name="Nie H."/>
            <person name="Peng J."/>
            <person name="Xu J."/>
            <person name="Wang Y."/>
            <person name="Yuan Z."/>
            <person name="Wen Y."/>
            <person name="Yao Z."/>
            <person name="Shen Y."/>
            <person name="Qiang B."/>
            <person name="Hou Y."/>
            <person name="Yu J."/>
            <person name="Jin Q."/>
        </authorList>
    </citation>
    <scope>NUCLEOTIDE SEQUENCE [LARGE SCALE GENOMIC DNA]</scope>
    <source>
        <strain>Ss046</strain>
    </source>
</reference>
<name>PNP_SHISS</name>
<comment type="function">
    <text evidence="1">Involved in mRNA degradation. Catalyzes the phosphorolysis of single-stranded polyribonucleotides processively in the 3'- to 5'-direction.</text>
</comment>
<comment type="catalytic activity">
    <reaction evidence="1">
        <text>RNA(n+1) + phosphate = RNA(n) + a ribonucleoside 5'-diphosphate</text>
        <dbReference type="Rhea" id="RHEA:22096"/>
        <dbReference type="Rhea" id="RHEA-COMP:14527"/>
        <dbReference type="Rhea" id="RHEA-COMP:17342"/>
        <dbReference type="ChEBI" id="CHEBI:43474"/>
        <dbReference type="ChEBI" id="CHEBI:57930"/>
        <dbReference type="ChEBI" id="CHEBI:140395"/>
        <dbReference type="EC" id="2.7.7.8"/>
    </reaction>
</comment>
<comment type="cofactor">
    <cofactor evidence="1">
        <name>Mg(2+)</name>
        <dbReference type="ChEBI" id="CHEBI:18420"/>
    </cofactor>
</comment>
<comment type="subunit">
    <text evidence="1">Component of the RNA degradosome, which is a multiprotein complex involved in RNA processing and mRNA degradation.</text>
</comment>
<comment type="subcellular location">
    <subcellularLocation>
        <location evidence="1">Cytoplasm</location>
    </subcellularLocation>
</comment>
<comment type="similarity">
    <text evidence="1">Belongs to the polyribonucleotide nucleotidyltransferase family.</text>
</comment>
<comment type="sequence caution" evidence="3">
    <conflict type="erroneous initiation">
        <sequence resource="EMBL-CDS" id="AAZ89885"/>
    </conflict>
</comment>
<proteinExistence type="inferred from homology"/>
<accession>Q3YX77</accession>
<protein>
    <recommendedName>
        <fullName evidence="1">Polyribonucleotide nucleotidyltransferase</fullName>
        <ecNumber evidence="1">2.7.7.8</ecNumber>
    </recommendedName>
    <alternativeName>
        <fullName evidence="1">Polynucleotide phosphorylase</fullName>
        <shortName evidence="1">PNPase</shortName>
    </alternativeName>
</protein>
<gene>
    <name evidence="1" type="primary">pnp</name>
    <name type="ordered locus">SSON_3310</name>
</gene>
<keyword id="KW-0963">Cytoplasm</keyword>
<keyword id="KW-0460">Magnesium</keyword>
<keyword id="KW-0479">Metal-binding</keyword>
<keyword id="KW-0548">Nucleotidyltransferase</keyword>
<keyword id="KW-1185">Reference proteome</keyword>
<keyword id="KW-0694">RNA-binding</keyword>
<keyword id="KW-0808">Transferase</keyword>
<sequence length="711" mass="77102">MLNPIVRKFQYGQHTVTLETGMMARQATAAVMVSMDDTAVFVTVVGQKKAKPGQDFFPLTVNYQERTYAAGRIPGSFFRREGRPSEGETLIARLIDRPIRPLFPEGFVNEVQVIATVVSVNPQVNPDIVAMIGASAALSLSGIPFNGPIGAARVGYINDQYVLNPTQDELKESKLDLVVAGTEAAVLMVESEAELLSEDQMLGAVVFGHEQQQVVIQNINELVKEAGKPRWDWQPEPVNEALNARVAALAEARLSDAYRITDKQERYAQVDVIKSETIATLLAEDETLDENELGEILHAIEKNVVRSRVLAGEPRIDGREKDMIRGLDVRTGVLPRTHGSALFTRGETQALVTATLGTARDAQVLDELMGERTDTFLFHYNFPPYSVGETGMVGSPKRREIGHGRLAKRGVLAVMPDMDKFPYTVRVVSEITESNGSSSMASVCGASLALMDAGVPIKAAVAGIAMGLVKEGDNYVVLSDILGDEDHLGDMDFKVAGSRDGISALQMDIKIEGITKEIMQVALNQAKGARLHILGVMEQAINAPRGDISEFAPRIHTIKINPDKIKDVIGKGGSVIRALTEETGTTIEIEDDGTVKIAATDGEKAKHAIRRIEEITAEIEVGRVYTGKVTRIVDFGAFVAIGGGKEGLVHISQIADKRVEKVTDYLQMGQEVPVKVLEVDRQGRIRLSIKEATEQSQPAAAPEAPAAEQGE</sequence>
<evidence type="ECO:0000255" key="1">
    <source>
        <dbReference type="HAMAP-Rule" id="MF_01595"/>
    </source>
</evidence>
<evidence type="ECO:0000256" key="2">
    <source>
        <dbReference type="SAM" id="MobiDB-lite"/>
    </source>
</evidence>
<evidence type="ECO:0000305" key="3"/>
<organism>
    <name type="scientific">Shigella sonnei (strain Ss046)</name>
    <dbReference type="NCBI Taxonomy" id="300269"/>
    <lineage>
        <taxon>Bacteria</taxon>
        <taxon>Pseudomonadati</taxon>
        <taxon>Pseudomonadota</taxon>
        <taxon>Gammaproteobacteria</taxon>
        <taxon>Enterobacterales</taxon>
        <taxon>Enterobacteriaceae</taxon>
        <taxon>Shigella</taxon>
    </lineage>
</organism>
<feature type="chain" id="PRO_0000329852" description="Polyribonucleotide nucleotidyltransferase">
    <location>
        <begin position="1"/>
        <end position="711"/>
    </location>
</feature>
<feature type="domain" description="KH" evidence="1">
    <location>
        <begin position="553"/>
        <end position="612"/>
    </location>
</feature>
<feature type="domain" description="S1 motif" evidence="1">
    <location>
        <begin position="622"/>
        <end position="690"/>
    </location>
</feature>
<feature type="region of interest" description="Disordered" evidence="2">
    <location>
        <begin position="689"/>
        <end position="711"/>
    </location>
</feature>
<feature type="compositionally biased region" description="Low complexity" evidence="2">
    <location>
        <begin position="694"/>
        <end position="711"/>
    </location>
</feature>
<feature type="binding site" evidence="1">
    <location>
        <position position="486"/>
    </location>
    <ligand>
        <name>Mg(2+)</name>
        <dbReference type="ChEBI" id="CHEBI:18420"/>
    </ligand>
</feature>
<feature type="binding site" evidence="1">
    <location>
        <position position="492"/>
    </location>
    <ligand>
        <name>Mg(2+)</name>
        <dbReference type="ChEBI" id="CHEBI:18420"/>
    </ligand>
</feature>